<dbReference type="EC" id="2.6.1.87" evidence="1"/>
<dbReference type="EMBL" id="BX571867">
    <property type="protein sequence ID" value="CAE15034.1"/>
    <property type="molecule type" value="Genomic_DNA"/>
</dbReference>
<dbReference type="RefSeq" id="WP_011146882.1">
    <property type="nucleotide sequence ID" value="NC_005126.1"/>
</dbReference>
<dbReference type="SMR" id="Q7N3Q5"/>
<dbReference type="STRING" id="243265.plu2660"/>
<dbReference type="GeneID" id="48848923"/>
<dbReference type="KEGG" id="plu:plu2660"/>
<dbReference type="eggNOG" id="COG0399">
    <property type="taxonomic scope" value="Bacteria"/>
</dbReference>
<dbReference type="HOGENOM" id="CLU_033332_0_3_6"/>
<dbReference type="OrthoDB" id="9804264at2"/>
<dbReference type="UniPathway" id="UPA00030"/>
<dbReference type="UniPathway" id="UPA00032">
    <property type="reaction ID" value="UER00493"/>
</dbReference>
<dbReference type="Proteomes" id="UP000002514">
    <property type="component" value="Chromosome"/>
</dbReference>
<dbReference type="GO" id="GO:0016020">
    <property type="term" value="C:membrane"/>
    <property type="evidence" value="ECO:0007669"/>
    <property type="project" value="GOC"/>
</dbReference>
<dbReference type="GO" id="GO:0030170">
    <property type="term" value="F:pyridoxal phosphate binding"/>
    <property type="evidence" value="ECO:0007669"/>
    <property type="project" value="TreeGrafter"/>
</dbReference>
<dbReference type="GO" id="GO:0099620">
    <property type="term" value="F:UDP-4-amino-4-deoxy-L-arabinose aminotransferase"/>
    <property type="evidence" value="ECO:0007669"/>
    <property type="project" value="UniProtKB-EC"/>
</dbReference>
<dbReference type="GO" id="GO:0009245">
    <property type="term" value="P:lipid A biosynthetic process"/>
    <property type="evidence" value="ECO:0007669"/>
    <property type="project" value="UniProtKB-KW"/>
</dbReference>
<dbReference type="GO" id="GO:0009103">
    <property type="term" value="P:lipopolysaccharide biosynthetic process"/>
    <property type="evidence" value="ECO:0007669"/>
    <property type="project" value="UniProtKB-UniRule"/>
</dbReference>
<dbReference type="GO" id="GO:0046677">
    <property type="term" value="P:response to antibiotic"/>
    <property type="evidence" value="ECO:0007669"/>
    <property type="project" value="UniProtKB-KW"/>
</dbReference>
<dbReference type="CDD" id="cd00616">
    <property type="entry name" value="AHBA_syn"/>
    <property type="match status" value="1"/>
</dbReference>
<dbReference type="FunFam" id="3.40.640.10:FF:000040">
    <property type="entry name" value="UDP-4-amino-4-deoxy-L-arabinose--oxoglutarate aminotransferase"/>
    <property type="match status" value="1"/>
</dbReference>
<dbReference type="FunFam" id="3.90.1150.10:FF:000030">
    <property type="entry name" value="UDP-4-amino-4-deoxy-L-arabinose--oxoglutarate aminotransferase"/>
    <property type="match status" value="1"/>
</dbReference>
<dbReference type="Gene3D" id="3.90.1150.10">
    <property type="entry name" value="Aspartate Aminotransferase, domain 1"/>
    <property type="match status" value="1"/>
</dbReference>
<dbReference type="Gene3D" id="3.40.640.10">
    <property type="entry name" value="Type I PLP-dependent aspartate aminotransferase-like (Major domain)"/>
    <property type="match status" value="1"/>
</dbReference>
<dbReference type="HAMAP" id="MF_01167">
    <property type="entry name" value="ArnB_transfer"/>
    <property type="match status" value="1"/>
</dbReference>
<dbReference type="InterPro" id="IPR022850">
    <property type="entry name" value="ArnB_NH2Trfase"/>
</dbReference>
<dbReference type="InterPro" id="IPR000653">
    <property type="entry name" value="DegT/StrS_aminotransferase"/>
</dbReference>
<dbReference type="InterPro" id="IPR015424">
    <property type="entry name" value="PyrdxlP-dep_Trfase"/>
</dbReference>
<dbReference type="InterPro" id="IPR015421">
    <property type="entry name" value="PyrdxlP-dep_Trfase_major"/>
</dbReference>
<dbReference type="InterPro" id="IPR015422">
    <property type="entry name" value="PyrdxlP-dep_Trfase_small"/>
</dbReference>
<dbReference type="NCBIfam" id="NF008658">
    <property type="entry name" value="PRK11658.1"/>
    <property type="match status" value="1"/>
</dbReference>
<dbReference type="PANTHER" id="PTHR30244">
    <property type="entry name" value="TRANSAMINASE"/>
    <property type="match status" value="1"/>
</dbReference>
<dbReference type="PANTHER" id="PTHR30244:SF41">
    <property type="entry name" value="UDP-4-AMINO-4-DEOXY-L-ARABINOSE--OXOGLUTARATE AMINOTRANSFERASE"/>
    <property type="match status" value="1"/>
</dbReference>
<dbReference type="Pfam" id="PF01041">
    <property type="entry name" value="DegT_DnrJ_EryC1"/>
    <property type="match status" value="1"/>
</dbReference>
<dbReference type="PIRSF" id="PIRSF000390">
    <property type="entry name" value="PLP_StrS"/>
    <property type="match status" value="1"/>
</dbReference>
<dbReference type="SUPFAM" id="SSF53383">
    <property type="entry name" value="PLP-dependent transferases"/>
    <property type="match status" value="1"/>
</dbReference>
<proteinExistence type="inferred from homology"/>
<accession>Q7N3Q5</accession>
<comment type="function">
    <text evidence="1">Catalyzes the conversion of UDP-4-keto-arabinose (UDP-Ara4O) to UDP-4-amino-4-deoxy-L-arabinose (UDP-L-Ara4N). The modified arabinose is attached to lipid A and is required for resistance to polymyxin and cationic antimicrobial peptides.</text>
</comment>
<comment type="catalytic activity">
    <reaction evidence="1">
        <text>UDP-4-amino-4-deoxy-beta-L-arabinose + 2-oxoglutarate = UDP-beta-L-threo-pentopyranos-4-ulose + L-glutamate</text>
        <dbReference type="Rhea" id="RHEA:24710"/>
        <dbReference type="ChEBI" id="CHEBI:16810"/>
        <dbReference type="ChEBI" id="CHEBI:29985"/>
        <dbReference type="ChEBI" id="CHEBI:58708"/>
        <dbReference type="ChEBI" id="CHEBI:58710"/>
        <dbReference type="EC" id="2.6.1.87"/>
    </reaction>
</comment>
<comment type="cofactor">
    <cofactor evidence="1">
        <name>pyridoxal 5'-phosphate</name>
        <dbReference type="ChEBI" id="CHEBI:597326"/>
    </cofactor>
</comment>
<comment type="pathway">
    <text evidence="1">Nucleotide-sugar biosynthesis; UDP-4-deoxy-4-formamido-beta-L-arabinose biosynthesis; UDP-4-deoxy-4-formamido-beta-L-arabinose from UDP-alpha-D-glucuronate: step 2/3.</text>
</comment>
<comment type="pathway">
    <text evidence="1">Bacterial outer membrane biogenesis; lipopolysaccharide biosynthesis.</text>
</comment>
<comment type="subunit">
    <text evidence="1">Homodimer.</text>
</comment>
<comment type="similarity">
    <text evidence="1">Belongs to the DegT/DnrJ/EryC1 family. ArnB subfamily.</text>
</comment>
<name>ARNB_PHOLL</name>
<reference key="1">
    <citation type="journal article" date="2003" name="Nat. Biotechnol.">
        <title>The genome sequence of the entomopathogenic bacterium Photorhabdus luminescens.</title>
        <authorList>
            <person name="Duchaud E."/>
            <person name="Rusniok C."/>
            <person name="Frangeul L."/>
            <person name="Buchrieser C."/>
            <person name="Givaudan A."/>
            <person name="Taourit S."/>
            <person name="Bocs S."/>
            <person name="Boursaux-Eude C."/>
            <person name="Chandler M."/>
            <person name="Charles J.-F."/>
            <person name="Dassa E."/>
            <person name="Derose R."/>
            <person name="Derzelle S."/>
            <person name="Freyssinet G."/>
            <person name="Gaudriault S."/>
            <person name="Medigue C."/>
            <person name="Lanois A."/>
            <person name="Powell K."/>
            <person name="Siguier P."/>
            <person name="Vincent R."/>
            <person name="Wingate V."/>
            <person name="Zouine M."/>
            <person name="Glaser P."/>
            <person name="Boemare N."/>
            <person name="Danchin A."/>
            <person name="Kunst F."/>
        </authorList>
    </citation>
    <scope>NUCLEOTIDE SEQUENCE [LARGE SCALE GENOMIC DNA]</scope>
    <source>
        <strain>DSM 15139 / CIP 105565 / TT01</strain>
    </source>
</reference>
<sequence>MDSFLPFSRPAIGDEEIQAVEKVLRSGWITTGPQNHQLEQDFCRMFGCKHAVALASATAGMHLTLMALGIGPGDEVITPSQTWVSTINMICLLGAEPIMIDVDRHTLMVDAQTVKKAITSRTKAIIPVHYAGAPCDLDILRGIAQEAGIPLIEDAAHALGTRYKNEWIGEHGTAIFSFHAIKNATCAEGGLIATDNNELVERIRCLKFHGLGIDAFDRQIQGRRPQAEVVEPGYKYNLSDIHAAIAVVQLSKLESMNIRRRQIVARYSTALKDSPLQMLSVPDYEHIHAHHLFMVRVNKDVCGIDRDTLMERLKNKNIGTGLHFRAAHTQKYYRDRYPQLSLPESEWNSVTLCSLPLFPDMSDDDVDRVTDALQEIISEHR</sequence>
<keyword id="KW-0032">Aminotransferase</keyword>
<keyword id="KW-0046">Antibiotic resistance</keyword>
<keyword id="KW-0441">Lipid A biosynthesis</keyword>
<keyword id="KW-0444">Lipid biosynthesis</keyword>
<keyword id="KW-0443">Lipid metabolism</keyword>
<keyword id="KW-0448">Lipopolysaccharide biosynthesis</keyword>
<keyword id="KW-0663">Pyridoxal phosphate</keyword>
<keyword id="KW-1185">Reference proteome</keyword>
<keyword id="KW-0808">Transferase</keyword>
<feature type="chain" id="PRO_0000110021" description="UDP-4-amino-4-deoxy-L-arabinose--oxoglutarate aminotransferase">
    <location>
        <begin position="1"/>
        <end position="381"/>
    </location>
</feature>
<feature type="modified residue" description="N6-(pyridoxal phosphate)lysine" evidence="1">
    <location>
        <position position="182"/>
    </location>
</feature>
<organism>
    <name type="scientific">Photorhabdus laumondii subsp. laumondii (strain DSM 15139 / CIP 105565 / TT01)</name>
    <name type="common">Photorhabdus luminescens subsp. laumondii</name>
    <dbReference type="NCBI Taxonomy" id="243265"/>
    <lineage>
        <taxon>Bacteria</taxon>
        <taxon>Pseudomonadati</taxon>
        <taxon>Pseudomonadota</taxon>
        <taxon>Gammaproteobacteria</taxon>
        <taxon>Enterobacterales</taxon>
        <taxon>Morganellaceae</taxon>
        <taxon>Photorhabdus</taxon>
    </lineage>
</organism>
<evidence type="ECO:0000255" key="1">
    <source>
        <dbReference type="HAMAP-Rule" id="MF_01167"/>
    </source>
</evidence>
<protein>
    <recommendedName>
        <fullName evidence="1">UDP-4-amino-4-deoxy-L-arabinose--oxoglutarate aminotransferase</fullName>
        <ecNumber evidence="1">2.6.1.87</ecNumber>
    </recommendedName>
    <alternativeName>
        <fullName evidence="1">UDP-(beta-L-threo-pentapyranosyl-4''-ulose diphosphate) aminotransferase</fullName>
        <shortName evidence="1">UDP-Ara4O aminotransferase</shortName>
    </alternativeName>
    <alternativeName>
        <fullName evidence="1">UDP-4-amino-4-deoxy-L-arabinose aminotransferase</fullName>
    </alternativeName>
</protein>
<gene>
    <name evidence="1" type="primary">arnB</name>
    <name type="ordered locus">plu2660</name>
</gene>